<dbReference type="EMBL" id="AF541282">
    <property type="protein sequence ID" value="AAP57771.1"/>
    <property type="molecule type" value="mRNA"/>
</dbReference>
<dbReference type="EMBL" id="AY436785">
    <property type="protein sequence ID" value="AAR10818.1"/>
    <property type="molecule type" value="mRNA"/>
</dbReference>
<dbReference type="EMBL" id="AF357888">
    <property type="protein sequence ID" value="AAO85401.1"/>
    <property type="molecule type" value="mRNA"/>
</dbReference>
<dbReference type="EMBL" id="AY304517">
    <property type="protein sequence ID" value="AAP72154.1"/>
    <property type="molecule type" value="mRNA"/>
</dbReference>
<dbReference type="EMBL" id="AL136596">
    <property type="protein sequence ID" value="CAB66531.1"/>
    <property type="molecule type" value="mRNA"/>
</dbReference>
<dbReference type="EMBL" id="AK021597">
    <property type="protein sequence ID" value="BAB13851.1"/>
    <property type="molecule type" value="mRNA"/>
</dbReference>
<dbReference type="EMBL" id="BC012339">
    <property type="protein sequence ID" value="AAH12339.1"/>
    <property type="molecule type" value="mRNA"/>
</dbReference>
<dbReference type="CCDS" id="CCDS12043.1">
    <molecule id="Q6T4P5-3"/>
</dbReference>
<dbReference type="CCDS" id="CCDS58636.1">
    <molecule id="Q6T4P5-1"/>
</dbReference>
<dbReference type="RefSeq" id="NP_001257295.1">
    <molecule id="Q6T4P5-1"/>
    <property type="nucleotide sequence ID" value="NM_001270366.2"/>
</dbReference>
<dbReference type="RefSeq" id="NP_079164.1">
    <molecule id="Q6T4P5-3"/>
    <property type="nucleotide sequence ID" value="NM_024888.3"/>
</dbReference>
<dbReference type="RefSeq" id="XP_011526619.1">
    <molecule id="Q6T4P5-3"/>
    <property type="nucleotide sequence ID" value="XM_011528317.4"/>
</dbReference>
<dbReference type="RefSeq" id="XP_054178182.1">
    <molecule id="Q6T4P5-3"/>
    <property type="nucleotide sequence ID" value="XM_054322207.1"/>
</dbReference>
<dbReference type="BioGRID" id="123019">
    <property type="interactions" value="13"/>
</dbReference>
<dbReference type="CORUM" id="Q6T4P5"/>
<dbReference type="FunCoup" id="Q6T4P5">
    <property type="interactions" value="221"/>
</dbReference>
<dbReference type="IntAct" id="Q6T4P5">
    <property type="interactions" value="17"/>
</dbReference>
<dbReference type="MINT" id="Q6T4P5"/>
<dbReference type="STRING" id="9606.ENSP00000352962"/>
<dbReference type="DEPOD" id="PLPPR3"/>
<dbReference type="GlyCosmos" id="Q6T4P5">
    <property type="glycosylation" value="2 sites, No reported glycans"/>
</dbReference>
<dbReference type="GlyGen" id="Q6T4P5">
    <property type="glycosylation" value="2 sites"/>
</dbReference>
<dbReference type="iPTMnet" id="Q6T4P5"/>
<dbReference type="PhosphoSitePlus" id="Q6T4P5"/>
<dbReference type="BioMuta" id="PLPPR3"/>
<dbReference type="DMDM" id="74723394"/>
<dbReference type="jPOST" id="Q6T4P5"/>
<dbReference type="MassIVE" id="Q6T4P5"/>
<dbReference type="PaxDb" id="9606-ENSP00000352962"/>
<dbReference type="PeptideAtlas" id="Q6T4P5"/>
<dbReference type="ProteomicsDB" id="67367">
    <molecule id="Q6T4P5-1"/>
</dbReference>
<dbReference type="ProteomicsDB" id="67368">
    <molecule id="Q6T4P5-2"/>
</dbReference>
<dbReference type="ProteomicsDB" id="67369">
    <molecule id="Q6T4P5-3"/>
</dbReference>
<dbReference type="ProteomicsDB" id="67370">
    <molecule id="Q6T4P5-4"/>
</dbReference>
<dbReference type="Pumba" id="Q6T4P5"/>
<dbReference type="Antibodypedia" id="53515">
    <property type="antibodies" value="98 antibodies from 21 providers"/>
</dbReference>
<dbReference type="DNASU" id="79948"/>
<dbReference type="Ensembl" id="ENST00000359894.6">
    <molecule id="Q6T4P5-3"/>
    <property type="protein sequence ID" value="ENSP00000352962.2"/>
    <property type="gene ID" value="ENSG00000129951.19"/>
</dbReference>
<dbReference type="Ensembl" id="ENST00000519502.3">
    <molecule id="Q6T4P5-1"/>
    <property type="protein sequence ID" value="ENSP00000466122.3"/>
    <property type="gene ID" value="ENSG00000129951.19"/>
</dbReference>
<dbReference type="Ensembl" id="ENST00000520876.8">
    <molecule id="Q6T4P5-1"/>
    <property type="protein sequence ID" value="ENSP00000430297.1"/>
    <property type="gene ID" value="ENSG00000129951.19"/>
</dbReference>
<dbReference type="GeneID" id="79948"/>
<dbReference type="KEGG" id="hsa:79948"/>
<dbReference type="MANE-Select" id="ENST00000520876.8">
    <property type="protein sequence ID" value="ENSP00000430297.1"/>
    <property type="RefSeq nucleotide sequence ID" value="NM_001270366.2"/>
    <property type="RefSeq protein sequence ID" value="NP_001257295.1"/>
</dbReference>
<dbReference type="UCSC" id="uc002lpx.3">
    <molecule id="Q6T4P5-1"/>
    <property type="organism name" value="human"/>
</dbReference>
<dbReference type="AGR" id="HGNC:23497"/>
<dbReference type="CTD" id="79948"/>
<dbReference type="DisGeNET" id="79948"/>
<dbReference type="GeneCards" id="PLPPR3"/>
<dbReference type="HGNC" id="HGNC:23497">
    <property type="gene designation" value="PLPPR3"/>
</dbReference>
<dbReference type="HPA" id="ENSG00000129951">
    <property type="expression patterns" value="Tissue enhanced (bone marrow, brain, fallopian tube)"/>
</dbReference>
<dbReference type="MIM" id="610391">
    <property type="type" value="gene"/>
</dbReference>
<dbReference type="neXtProt" id="NX_Q6T4P5"/>
<dbReference type="OpenTargets" id="ENSG00000129951"/>
<dbReference type="VEuPathDB" id="HostDB:ENSG00000129951"/>
<dbReference type="eggNOG" id="KOG3030">
    <property type="taxonomic scope" value="Eukaryota"/>
</dbReference>
<dbReference type="GeneTree" id="ENSGT00940000160280"/>
<dbReference type="HOGENOM" id="CLU_021458_8_0_1"/>
<dbReference type="InParanoid" id="Q6T4P5"/>
<dbReference type="OMA" id="HHPVVQA"/>
<dbReference type="OrthoDB" id="8907274at2759"/>
<dbReference type="PAN-GO" id="Q6T4P5">
    <property type="GO annotations" value="6 GO annotations based on evolutionary models"/>
</dbReference>
<dbReference type="PhylomeDB" id="Q6T4P5"/>
<dbReference type="BRENDA" id="3.1.3.4">
    <property type="organism ID" value="2681"/>
</dbReference>
<dbReference type="PathwayCommons" id="Q6T4P5"/>
<dbReference type="Reactome" id="R-HSA-419408">
    <property type="pathway name" value="Lysosphingolipid and LPA receptors"/>
</dbReference>
<dbReference type="SignaLink" id="Q6T4P5"/>
<dbReference type="BioGRID-ORCS" id="79948">
    <property type="hits" value="22 hits in 1093 CRISPR screens"/>
</dbReference>
<dbReference type="ChiTaRS" id="PLPPR3">
    <property type="organism name" value="human"/>
</dbReference>
<dbReference type="GenomeRNAi" id="79948"/>
<dbReference type="Pharos" id="Q6T4P5">
    <property type="development level" value="Tbio"/>
</dbReference>
<dbReference type="PRO" id="PR:Q6T4P5"/>
<dbReference type="Proteomes" id="UP000005640">
    <property type="component" value="Chromosome 19"/>
</dbReference>
<dbReference type="RNAct" id="Q6T4P5">
    <property type="molecule type" value="protein"/>
</dbReference>
<dbReference type="Bgee" id="ENSG00000129951">
    <property type="expression patterns" value="Expressed in cortical plate and 108 other cell types or tissues"/>
</dbReference>
<dbReference type="ExpressionAtlas" id="Q6T4P5">
    <property type="expression patterns" value="baseline and differential"/>
</dbReference>
<dbReference type="GO" id="GO:0005886">
    <property type="term" value="C:plasma membrane"/>
    <property type="evidence" value="ECO:0000318"/>
    <property type="project" value="GO_Central"/>
</dbReference>
<dbReference type="GO" id="GO:0008195">
    <property type="term" value="F:phosphatidate phosphatase activity"/>
    <property type="evidence" value="ECO:0000318"/>
    <property type="project" value="GO_Central"/>
</dbReference>
<dbReference type="GO" id="GO:0046839">
    <property type="term" value="P:phospholipid dephosphorylation"/>
    <property type="evidence" value="ECO:0000318"/>
    <property type="project" value="GO_Central"/>
</dbReference>
<dbReference type="GO" id="GO:0006644">
    <property type="term" value="P:phospholipid metabolic process"/>
    <property type="evidence" value="ECO:0000318"/>
    <property type="project" value="GO_Central"/>
</dbReference>
<dbReference type="GO" id="GO:0007165">
    <property type="term" value="P:signal transduction"/>
    <property type="evidence" value="ECO:0000318"/>
    <property type="project" value="GO_Central"/>
</dbReference>
<dbReference type="CDD" id="cd03384">
    <property type="entry name" value="PAP2_wunen"/>
    <property type="match status" value="1"/>
</dbReference>
<dbReference type="FunFam" id="1.20.144.10:FF:000014">
    <property type="entry name" value="Phospholipid phosphatase-related protein type 3"/>
    <property type="match status" value="1"/>
</dbReference>
<dbReference type="Gene3D" id="1.20.144.10">
    <property type="entry name" value="Phosphatidic acid phosphatase type 2/haloperoxidase"/>
    <property type="match status" value="1"/>
</dbReference>
<dbReference type="InterPro" id="IPR036938">
    <property type="entry name" value="P_Acid_Pase_2/haloperoxi_sf"/>
</dbReference>
<dbReference type="InterPro" id="IPR000326">
    <property type="entry name" value="P_Acid_Pase_2/haloperoxidase"/>
</dbReference>
<dbReference type="InterPro" id="IPR043216">
    <property type="entry name" value="PA_PP_rel"/>
</dbReference>
<dbReference type="PANTHER" id="PTHR10165">
    <property type="entry name" value="LIPID PHOSPHATE PHOSPHATASE"/>
    <property type="match status" value="1"/>
</dbReference>
<dbReference type="PANTHER" id="PTHR10165:SF14">
    <property type="entry name" value="PHOSPHOLIPID PHOSPHATASE-RELATED PROTEIN TYPE 3"/>
    <property type="match status" value="1"/>
</dbReference>
<dbReference type="Pfam" id="PF01569">
    <property type="entry name" value="PAP2"/>
    <property type="match status" value="1"/>
</dbReference>
<dbReference type="SMART" id="SM00014">
    <property type="entry name" value="acidPPc"/>
    <property type="match status" value="1"/>
</dbReference>
<dbReference type="SUPFAM" id="SSF48317">
    <property type="entry name" value="Acid phosphatase/Vanadium-dependent haloperoxidase"/>
    <property type="match status" value="1"/>
</dbReference>
<sequence length="718" mass="76037">MISTKEKNKIPKDSMTLLPCFYFVELPIVASSIVSLYFLELTDLFKPAKVGFQCYDRTLSMPYVETNEELIPLLMLLSLAFAAPAASIMVAEGMLYCLQSRLWGRAGGPAGAEGSINAGGCNFNSFLRRTVRFVGVHVFGLCATALVTDVIQLATGYHTPFFLTVCKPNYTLLGTSCEVNPYITQDICSGHDIHAILSARKTFPSQHATLSAFAAVYVSMYFNSVISDTTKLLKPILVFAFAIAAGVCGLTQITQYRSHPVDVYAGFLIGAGIAAYLACHAVGNFQAPPAEKPAAPAPAKDALRALTQRGHDSVYQQNKSVSTDELGPPGRLEGAPRPVAREKTSLGSLKRASVDVDLLAPRSPMAKENMVTFSHTLPRASAPSLDDPARRHMTIHVPLDASRSKQLISEWKQKSLEGRGLGLPDDASPGHLRAPAEPMAEEEEEEEDEEEEEEEEEEEDEGPAPPSLYPTVQARPGLGPRVILPPRAGPPPLVHIPEEGAQTGAGLSPKSGAGVRAKWLMMAEKSGAAVANPPRLLQVIAMSKAPGAPGPKAAETASSSSASSDSSQYRSPSDRDSASIVTIDAHAPHHPVVHLSAGGAPWEWKAAGGGAKAEADGGYELGDLARGFRGGAKPPGVSPGSSVSDVDQEEPRFGAVATVNLATGEGLPPLGAADGALGPGSRESTLRRHAGGLGLAEREAEAEAEGYFRKMQARRFPD</sequence>
<comment type="subcellular location">
    <subcellularLocation>
        <location evidence="10">Membrane</location>
        <topology evidence="10">Multi-pass membrane protein</topology>
    </subcellularLocation>
</comment>
<comment type="alternative products">
    <event type="alternative splicing"/>
    <isoform>
        <id>Q6T4P5-1</id>
        <name>1</name>
        <name>PRG-2a</name>
        <sequence type="displayed"/>
    </isoform>
    <isoform>
        <id>Q6T4P5-2</id>
        <name>2</name>
        <sequence type="described" ref="VSP_031005"/>
    </isoform>
    <isoform>
        <id>Q6T4P5-3</id>
        <name>3</name>
        <name>PRG-2b</name>
        <sequence type="described" ref="VSP_031006"/>
    </isoform>
    <isoform>
        <id>Q6T4P5-4</id>
        <name>4</name>
        <sequence type="described" ref="VSP_031004"/>
    </isoform>
</comment>
<comment type="similarity">
    <text evidence="10">Belongs to the PA-phosphatase related phosphoesterase family.</text>
</comment>
<comment type="caution">
    <text evidence="1">Has most probably no phospholipid phosphatase activity (By similarity). This is supported by the fact that the phosphatase sequence motifs as well as the His residue acting as a nucleophile in active phosphatases of the PA-phosphatase related phosphoesterase family are not conserved (By similarity).</text>
</comment>
<name>PLPR3_HUMAN</name>
<feature type="chain" id="PRO_0000317529" description="Phospholipid phosphatase-related protein type 3">
    <location>
        <begin position="1"/>
        <end position="718"/>
    </location>
</feature>
<feature type="transmembrane region" description="Helical" evidence="3">
    <location>
        <begin position="18"/>
        <end position="38"/>
    </location>
</feature>
<feature type="transmembrane region" description="Helical" evidence="3">
    <location>
        <begin position="70"/>
        <end position="90"/>
    </location>
</feature>
<feature type="transmembrane region" description="Helical" evidence="3">
    <location>
        <begin position="133"/>
        <end position="153"/>
    </location>
</feature>
<feature type="transmembrane region" description="Helical" evidence="3">
    <location>
        <begin position="207"/>
        <end position="227"/>
    </location>
</feature>
<feature type="transmembrane region" description="Helical" evidence="3">
    <location>
        <begin position="233"/>
        <end position="253"/>
    </location>
</feature>
<feature type="transmembrane region" description="Helical" evidence="3">
    <location>
        <begin position="263"/>
        <end position="283"/>
    </location>
</feature>
<feature type="region of interest" description="Disordered" evidence="4">
    <location>
        <begin position="313"/>
        <end position="347"/>
    </location>
</feature>
<feature type="region of interest" description="Disordered" evidence="4">
    <location>
        <begin position="416"/>
        <end position="488"/>
    </location>
</feature>
<feature type="region of interest" description="Disordered" evidence="4">
    <location>
        <begin position="545"/>
        <end position="577"/>
    </location>
</feature>
<feature type="region of interest" description="Disordered" evidence="4">
    <location>
        <begin position="664"/>
        <end position="702"/>
    </location>
</feature>
<feature type="compositionally biased region" description="Polar residues" evidence="4">
    <location>
        <begin position="314"/>
        <end position="323"/>
    </location>
</feature>
<feature type="compositionally biased region" description="Acidic residues" evidence="4">
    <location>
        <begin position="439"/>
        <end position="462"/>
    </location>
</feature>
<feature type="compositionally biased region" description="Low complexity" evidence="4">
    <location>
        <begin position="545"/>
        <end position="571"/>
    </location>
</feature>
<feature type="compositionally biased region" description="Low complexity" evidence="4">
    <location>
        <begin position="664"/>
        <end position="680"/>
    </location>
</feature>
<feature type="modified residue" description="Phosphoserine" evidence="2">
    <location>
        <position position="322"/>
    </location>
</feature>
<feature type="modified residue" description="Phosphoserine" evidence="2">
    <location>
        <position position="353"/>
    </location>
</feature>
<feature type="modified residue" description="Phosphothreonine" evidence="2">
    <location>
        <position position="376"/>
    </location>
</feature>
<feature type="modified residue" description="Phosphoserine" evidence="2">
    <location>
        <position position="428"/>
    </location>
</feature>
<feature type="modified residue" description="Phosphoserine" evidence="2">
    <location>
        <position position="508"/>
    </location>
</feature>
<feature type="modified residue" description="Phosphoserine" evidence="2">
    <location>
        <position position="641"/>
    </location>
</feature>
<feature type="glycosylation site" description="N-linked (GlcNAc...) asparagine" evidence="3">
    <location>
        <position position="169"/>
    </location>
</feature>
<feature type="glycosylation site" description="N-linked (GlcNAc...) asparagine" evidence="3">
    <location>
        <position position="318"/>
    </location>
</feature>
<feature type="splice variant" id="VSP_031004" description="In isoform 4." evidence="7">
    <location>
        <begin position="1"/>
        <end position="392"/>
    </location>
</feature>
<feature type="splice variant" id="VSP_031005" description="In isoform 2." evidence="8">
    <original>V</original>
    <variation>VG</variation>
    <location>
        <position position="134"/>
    </location>
</feature>
<feature type="splice variant" id="VSP_031006" description="In isoform 3." evidence="5 6 9">
    <original>S</original>
    <variation>SVSPAPHCPSQALLLTRGEPSLTPTPMPQ</variation>
    <location>
        <position position="219"/>
    </location>
</feature>
<feature type="sequence variant" id="VAR_038544" description="In dbSNP:rs1540615.">
    <original>I</original>
    <variation>T</variation>
    <location>
        <position position="193"/>
    </location>
</feature>
<feature type="sequence variant" id="VAR_038545" description="In dbSNP:rs3746136.">
    <original>A</original>
    <variation>V</variation>
    <location>
        <position position="690"/>
    </location>
</feature>
<keyword id="KW-0025">Alternative splicing</keyword>
<keyword id="KW-0325">Glycoprotein</keyword>
<keyword id="KW-0472">Membrane</keyword>
<keyword id="KW-0597">Phosphoprotein</keyword>
<keyword id="KW-1267">Proteomics identification</keyword>
<keyword id="KW-1185">Reference proteome</keyword>
<keyword id="KW-0812">Transmembrane</keyword>
<keyword id="KW-1133">Transmembrane helix</keyword>
<accession>Q6T4P5</accession>
<accession>Q86XQ4</accession>
<accession>Q96EH1</accession>
<accession>Q9BQF9</accession>
<accession>Q9HAJ4</accession>
<organism>
    <name type="scientific">Homo sapiens</name>
    <name type="common">Human</name>
    <dbReference type="NCBI Taxonomy" id="9606"/>
    <lineage>
        <taxon>Eukaryota</taxon>
        <taxon>Metazoa</taxon>
        <taxon>Chordata</taxon>
        <taxon>Craniata</taxon>
        <taxon>Vertebrata</taxon>
        <taxon>Euteleostomi</taxon>
        <taxon>Mammalia</taxon>
        <taxon>Eutheria</taxon>
        <taxon>Euarchontoglires</taxon>
        <taxon>Primates</taxon>
        <taxon>Haplorrhini</taxon>
        <taxon>Catarrhini</taxon>
        <taxon>Hominidae</taxon>
        <taxon>Homo</taxon>
    </lineage>
</organism>
<reference key="1">
    <citation type="journal article" date="2003" name="Nat. Neurosci.">
        <title>A new phospholipid phosphatase, PRG-1, is involved in axon growth and regenerative sprouting.</title>
        <authorList>
            <person name="Braeuer A.U."/>
            <person name="Savaskan N.E."/>
            <person name="Kuehn H."/>
            <person name="Prehn S."/>
            <person name="Ninnemann O."/>
            <person name="Nitsch R."/>
        </authorList>
    </citation>
    <scope>NUCLEOTIDE SEQUENCE [MRNA] (ISOFORM 3)</scope>
    <source>
        <tissue>Brain</tissue>
    </source>
</reference>
<reference key="2">
    <citation type="submission" date="2001-03" db="EMBL/GenBank/DDBJ databases">
        <title>A new brain specific member of the PAP-2 family.</title>
        <authorList>
            <person name="Ninnemann O."/>
            <person name="Braeuer A.U."/>
            <person name="Savaskan N."/>
            <person name="Nitsch R."/>
        </authorList>
    </citation>
    <scope>NUCLEOTIDE SEQUENCE [MRNA] (ISOFORMS 1 AND 2)</scope>
    <source>
        <tissue>Brain</tissue>
    </source>
</reference>
<reference key="3">
    <citation type="submission" date="2003-05" db="EMBL/GenBank/DDBJ databases">
        <title>Lipid phosphate phosphatase related proteins.</title>
        <authorList>
            <person name="Morris A.J."/>
            <person name="Sigal Y.J."/>
            <person name="McDermott M."/>
            <person name="Sciorra V.A."/>
        </authorList>
    </citation>
    <scope>NUCLEOTIDE SEQUENCE [MRNA] (ISOFORM 3)</scope>
</reference>
<reference key="4">
    <citation type="journal article" date="2001" name="Genome Res.">
        <title>Towards a catalog of human genes and proteins: sequencing and analysis of 500 novel complete protein coding human cDNAs.</title>
        <authorList>
            <person name="Wiemann S."/>
            <person name="Weil B."/>
            <person name="Wellenreuther R."/>
            <person name="Gassenhuber J."/>
            <person name="Glassl S."/>
            <person name="Ansorge W."/>
            <person name="Boecher M."/>
            <person name="Bloecker H."/>
            <person name="Bauersachs S."/>
            <person name="Blum H."/>
            <person name="Lauber J."/>
            <person name="Duesterhoeft A."/>
            <person name="Beyer A."/>
            <person name="Koehrer K."/>
            <person name="Strack N."/>
            <person name="Mewes H.-W."/>
            <person name="Ottenwaelder B."/>
            <person name="Obermaier B."/>
            <person name="Tampe J."/>
            <person name="Heubner D."/>
            <person name="Wambutt R."/>
            <person name="Korn B."/>
            <person name="Klein M."/>
            <person name="Poustka A."/>
        </authorList>
    </citation>
    <scope>NUCLEOTIDE SEQUENCE [LARGE SCALE MRNA] (ISOFORM 3)</scope>
    <source>
        <tissue>Amygdala</tissue>
    </source>
</reference>
<reference key="5">
    <citation type="journal article" date="2004" name="Nat. Genet.">
        <title>Complete sequencing and characterization of 21,243 full-length human cDNAs.</title>
        <authorList>
            <person name="Ota T."/>
            <person name="Suzuki Y."/>
            <person name="Nishikawa T."/>
            <person name="Otsuki T."/>
            <person name="Sugiyama T."/>
            <person name="Irie R."/>
            <person name="Wakamatsu A."/>
            <person name="Hayashi K."/>
            <person name="Sato H."/>
            <person name="Nagai K."/>
            <person name="Kimura K."/>
            <person name="Makita H."/>
            <person name="Sekine M."/>
            <person name="Obayashi M."/>
            <person name="Nishi T."/>
            <person name="Shibahara T."/>
            <person name="Tanaka T."/>
            <person name="Ishii S."/>
            <person name="Yamamoto J."/>
            <person name="Saito K."/>
            <person name="Kawai Y."/>
            <person name="Isono Y."/>
            <person name="Nakamura Y."/>
            <person name="Nagahari K."/>
            <person name="Murakami K."/>
            <person name="Yasuda T."/>
            <person name="Iwayanagi T."/>
            <person name="Wagatsuma M."/>
            <person name="Shiratori A."/>
            <person name="Sudo H."/>
            <person name="Hosoiri T."/>
            <person name="Kaku Y."/>
            <person name="Kodaira H."/>
            <person name="Kondo H."/>
            <person name="Sugawara M."/>
            <person name="Takahashi M."/>
            <person name="Kanda K."/>
            <person name="Yokoi T."/>
            <person name="Furuya T."/>
            <person name="Kikkawa E."/>
            <person name="Omura Y."/>
            <person name="Abe K."/>
            <person name="Kamihara K."/>
            <person name="Katsuta N."/>
            <person name="Sato K."/>
            <person name="Tanikawa M."/>
            <person name="Yamazaki M."/>
            <person name="Ninomiya K."/>
            <person name="Ishibashi T."/>
            <person name="Yamashita H."/>
            <person name="Murakawa K."/>
            <person name="Fujimori K."/>
            <person name="Tanai H."/>
            <person name="Kimata M."/>
            <person name="Watanabe M."/>
            <person name="Hiraoka S."/>
            <person name="Chiba Y."/>
            <person name="Ishida S."/>
            <person name="Ono Y."/>
            <person name="Takiguchi S."/>
            <person name="Watanabe S."/>
            <person name="Yosida M."/>
            <person name="Hotuta T."/>
            <person name="Kusano J."/>
            <person name="Kanehori K."/>
            <person name="Takahashi-Fujii A."/>
            <person name="Hara H."/>
            <person name="Tanase T.-O."/>
            <person name="Nomura Y."/>
            <person name="Togiya S."/>
            <person name="Komai F."/>
            <person name="Hara R."/>
            <person name="Takeuchi K."/>
            <person name="Arita M."/>
            <person name="Imose N."/>
            <person name="Musashino K."/>
            <person name="Yuuki H."/>
            <person name="Oshima A."/>
            <person name="Sasaki N."/>
            <person name="Aotsuka S."/>
            <person name="Yoshikawa Y."/>
            <person name="Matsunawa H."/>
            <person name="Ichihara T."/>
            <person name="Shiohata N."/>
            <person name="Sano S."/>
            <person name="Moriya S."/>
            <person name="Momiyama H."/>
            <person name="Satoh N."/>
            <person name="Takami S."/>
            <person name="Terashima Y."/>
            <person name="Suzuki O."/>
            <person name="Nakagawa S."/>
            <person name="Senoh A."/>
            <person name="Mizoguchi H."/>
            <person name="Goto Y."/>
            <person name="Shimizu F."/>
            <person name="Wakebe H."/>
            <person name="Hishigaki H."/>
            <person name="Watanabe T."/>
            <person name="Sugiyama A."/>
            <person name="Takemoto M."/>
            <person name="Kawakami B."/>
            <person name="Yamazaki M."/>
            <person name="Watanabe K."/>
            <person name="Kumagai A."/>
            <person name="Itakura S."/>
            <person name="Fukuzumi Y."/>
            <person name="Fujimori Y."/>
            <person name="Komiyama M."/>
            <person name="Tashiro H."/>
            <person name="Tanigami A."/>
            <person name="Fujiwara T."/>
            <person name="Ono T."/>
            <person name="Yamada K."/>
            <person name="Fujii Y."/>
            <person name="Ozaki K."/>
            <person name="Hirao M."/>
            <person name="Ohmori Y."/>
            <person name="Kawabata A."/>
            <person name="Hikiji T."/>
            <person name="Kobatake N."/>
            <person name="Inagaki H."/>
            <person name="Ikema Y."/>
            <person name="Okamoto S."/>
            <person name="Okitani R."/>
            <person name="Kawakami T."/>
            <person name="Noguchi S."/>
            <person name="Itoh T."/>
            <person name="Shigeta K."/>
            <person name="Senba T."/>
            <person name="Matsumura K."/>
            <person name="Nakajima Y."/>
            <person name="Mizuno T."/>
            <person name="Morinaga M."/>
            <person name="Sasaki M."/>
            <person name="Togashi T."/>
            <person name="Oyama M."/>
            <person name="Hata H."/>
            <person name="Watanabe M."/>
            <person name="Komatsu T."/>
            <person name="Mizushima-Sugano J."/>
            <person name="Satoh T."/>
            <person name="Shirai Y."/>
            <person name="Takahashi Y."/>
            <person name="Nakagawa K."/>
            <person name="Okumura K."/>
            <person name="Nagase T."/>
            <person name="Nomura N."/>
            <person name="Kikuchi H."/>
            <person name="Masuho Y."/>
            <person name="Yamashita R."/>
            <person name="Nakai K."/>
            <person name="Yada T."/>
            <person name="Nakamura Y."/>
            <person name="Ohara O."/>
            <person name="Isogai T."/>
            <person name="Sugano S."/>
        </authorList>
    </citation>
    <scope>NUCLEOTIDE SEQUENCE [LARGE SCALE MRNA] (ISOFORM 4)</scope>
    <source>
        <tissue>Embryo</tissue>
    </source>
</reference>
<reference key="6">
    <citation type="journal article" date="2004" name="Genome Res.">
        <title>The status, quality, and expansion of the NIH full-length cDNA project: the Mammalian Gene Collection (MGC).</title>
        <authorList>
            <consortium name="The MGC Project Team"/>
        </authorList>
    </citation>
    <scope>NUCLEOTIDE SEQUENCE [LARGE SCALE MRNA] OF 116-416 (ISOFORM 1)</scope>
    <source>
        <tissue>Eye</tissue>
    </source>
</reference>
<gene>
    <name evidence="12" type="primary">PLPPR3</name>
    <name evidence="9" type="synonym">LPPR3</name>
    <name evidence="8" type="synonym">PHP2</name>
    <name evidence="12" type="synonym">PRG2</name>
</gene>
<protein>
    <recommendedName>
        <fullName evidence="10">Phospholipid phosphatase-related protein type 3</fullName>
    </recommendedName>
    <alternativeName>
        <fullName evidence="1">Inactive phospholipid phosphatase PLPPR3</fullName>
    </alternativeName>
    <alternativeName>
        <fullName evidence="9">Lipid phosphate phosphatase-related protein type 3</fullName>
    </alternativeName>
    <alternativeName>
        <fullName evidence="8">PAP-2-like protein 2</fullName>
    </alternativeName>
    <alternativeName>
        <fullName evidence="11">Plasticity-related gene 2 protein</fullName>
        <shortName evidence="6">PRG-2</shortName>
    </alternativeName>
</protein>
<proteinExistence type="evidence at protein level"/>
<evidence type="ECO:0000250" key="1">
    <source>
        <dbReference type="UniProtKB" id="Q6WAY2"/>
    </source>
</evidence>
<evidence type="ECO:0000250" key="2">
    <source>
        <dbReference type="UniProtKB" id="Q7TPB0"/>
    </source>
</evidence>
<evidence type="ECO:0000255" key="3"/>
<evidence type="ECO:0000256" key="4">
    <source>
        <dbReference type="SAM" id="MobiDB-lite"/>
    </source>
</evidence>
<evidence type="ECO:0000303" key="5">
    <source>
    </source>
</evidence>
<evidence type="ECO:0000303" key="6">
    <source>
    </source>
</evidence>
<evidence type="ECO:0000303" key="7">
    <source>
    </source>
</evidence>
<evidence type="ECO:0000303" key="8">
    <source ref="2"/>
</evidence>
<evidence type="ECO:0000303" key="9">
    <source ref="3"/>
</evidence>
<evidence type="ECO:0000305" key="10"/>
<evidence type="ECO:0000305" key="11">
    <source>
    </source>
</evidence>
<evidence type="ECO:0000312" key="12">
    <source>
        <dbReference type="HGNC" id="HGNC:23497"/>
    </source>
</evidence>